<keyword id="KW-1185">Reference proteome</keyword>
<keyword id="KW-0687">Ribonucleoprotein</keyword>
<keyword id="KW-0689">Ribosomal protein</keyword>
<keyword id="KW-0694">RNA-binding</keyword>
<keyword id="KW-0699">rRNA-binding</keyword>
<gene>
    <name evidence="1" type="primary">rplU</name>
    <name evidence="1" type="synonym">rpl21</name>
    <name type="ordered locus">Synpcc7942_1219</name>
    <name type="ORF">sef0008</name>
</gene>
<dbReference type="EMBL" id="AB010691">
    <property type="protein sequence ID" value="BAA37100.1"/>
    <property type="molecule type" value="Genomic_DNA"/>
</dbReference>
<dbReference type="EMBL" id="AY120853">
    <property type="protein sequence ID" value="AAM82683.1"/>
    <property type="molecule type" value="Genomic_DNA"/>
</dbReference>
<dbReference type="EMBL" id="CP000100">
    <property type="protein sequence ID" value="ABB57249.1"/>
    <property type="molecule type" value="Genomic_DNA"/>
</dbReference>
<dbReference type="PIR" id="T44266">
    <property type="entry name" value="T44266"/>
</dbReference>
<dbReference type="RefSeq" id="WP_011377922.1">
    <property type="nucleotide sequence ID" value="NZ_JACJTX010000003.1"/>
</dbReference>
<dbReference type="SMR" id="Q9Z3H5"/>
<dbReference type="STRING" id="1140.Synpcc7942_1219"/>
<dbReference type="PaxDb" id="1140-Synpcc7942_1219"/>
<dbReference type="GeneID" id="72430078"/>
<dbReference type="KEGG" id="syf:Synpcc7942_1219"/>
<dbReference type="eggNOG" id="COG0261">
    <property type="taxonomic scope" value="Bacteria"/>
</dbReference>
<dbReference type="HOGENOM" id="CLU_061463_1_2_3"/>
<dbReference type="OrthoDB" id="9813334at2"/>
<dbReference type="BioCyc" id="SYNEL:SYNPCC7942_1219-MONOMER"/>
<dbReference type="Proteomes" id="UP000889800">
    <property type="component" value="Chromosome"/>
</dbReference>
<dbReference type="GO" id="GO:0005737">
    <property type="term" value="C:cytoplasm"/>
    <property type="evidence" value="ECO:0007669"/>
    <property type="project" value="UniProtKB-ARBA"/>
</dbReference>
<dbReference type="GO" id="GO:1990904">
    <property type="term" value="C:ribonucleoprotein complex"/>
    <property type="evidence" value="ECO:0007669"/>
    <property type="project" value="UniProtKB-KW"/>
</dbReference>
<dbReference type="GO" id="GO:0005840">
    <property type="term" value="C:ribosome"/>
    <property type="evidence" value="ECO:0007669"/>
    <property type="project" value="UniProtKB-KW"/>
</dbReference>
<dbReference type="GO" id="GO:0019843">
    <property type="term" value="F:rRNA binding"/>
    <property type="evidence" value="ECO:0007669"/>
    <property type="project" value="UniProtKB-UniRule"/>
</dbReference>
<dbReference type="GO" id="GO:0003735">
    <property type="term" value="F:structural constituent of ribosome"/>
    <property type="evidence" value="ECO:0007669"/>
    <property type="project" value="InterPro"/>
</dbReference>
<dbReference type="GO" id="GO:0006412">
    <property type="term" value="P:translation"/>
    <property type="evidence" value="ECO:0007669"/>
    <property type="project" value="UniProtKB-UniRule"/>
</dbReference>
<dbReference type="HAMAP" id="MF_01363">
    <property type="entry name" value="Ribosomal_bL21"/>
    <property type="match status" value="1"/>
</dbReference>
<dbReference type="InterPro" id="IPR028909">
    <property type="entry name" value="bL21-like"/>
</dbReference>
<dbReference type="InterPro" id="IPR036164">
    <property type="entry name" value="bL21-like_sf"/>
</dbReference>
<dbReference type="InterPro" id="IPR001787">
    <property type="entry name" value="Ribosomal_bL21"/>
</dbReference>
<dbReference type="InterPro" id="IPR018258">
    <property type="entry name" value="Ribosomal_bL21_CS"/>
</dbReference>
<dbReference type="NCBIfam" id="TIGR00061">
    <property type="entry name" value="L21"/>
    <property type="match status" value="1"/>
</dbReference>
<dbReference type="PANTHER" id="PTHR21349">
    <property type="entry name" value="50S RIBOSOMAL PROTEIN L21"/>
    <property type="match status" value="1"/>
</dbReference>
<dbReference type="PANTHER" id="PTHR21349:SF0">
    <property type="entry name" value="LARGE RIBOSOMAL SUBUNIT PROTEIN BL21M"/>
    <property type="match status" value="1"/>
</dbReference>
<dbReference type="Pfam" id="PF00829">
    <property type="entry name" value="Ribosomal_L21p"/>
    <property type="match status" value="1"/>
</dbReference>
<dbReference type="SUPFAM" id="SSF141091">
    <property type="entry name" value="L21p-like"/>
    <property type="match status" value="1"/>
</dbReference>
<dbReference type="PROSITE" id="PS01169">
    <property type="entry name" value="RIBOSOMAL_L21"/>
    <property type="match status" value="1"/>
</dbReference>
<evidence type="ECO:0000255" key="1">
    <source>
        <dbReference type="HAMAP-Rule" id="MF_01363"/>
    </source>
</evidence>
<evidence type="ECO:0000305" key="2"/>
<accession>Q9Z3H5</accession>
<accession>Q31NX0</accession>
<accession>Q79PF7</accession>
<comment type="function">
    <text evidence="1">This protein binds to 23S rRNA in the presence of protein L20.</text>
</comment>
<comment type="subunit">
    <text evidence="1">Part of the 50S ribosomal subunit. Contacts protein L20.</text>
</comment>
<comment type="similarity">
    <text evidence="1">Belongs to the bacterial ribosomal protein bL21 family.</text>
</comment>
<reference key="1">
    <citation type="journal article" date="1998" name="Science">
        <title>Expression of a gene cluster kaiABC as a circadian feedback process in cyanobacteria.</title>
        <authorList>
            <person name="Ishiura M."/>
            <person name="Kutsuna S."/>
            <person name="Aoki S."/>
            <person name="Iwasaki H."/>
            <person name="Andersson C.R."/>
            <person name="Tanabe A."/>
            <person name="Golden S.S."/>
            <person name="Johnson C.H."/>
            <person name="Kondo T."/>
        </authorList>
    </citation>
    <scope>NUCLEOTIDE SEQUENCE [GENOMIC DNA]</scope>
</reference>
<reference key="2">
    <citation type="submission" date="2002-06" db="EMBL/GenBank/DDBJ databases">
        <title>Synechococcus elongatus PCC7942 cosmid 7G3.</title>
        <authorList>
            <person name="Holtman C.K."/>
            <person name="Sandoval P."/>
            <person name="Chen Y."/>
            <person name="Socias T."/>
            <person name="Mohler B.J."/>
            <person name="McMurtry S."/>
            <person name="Gonzalez A."/>
            <person name="Salinas I."/>
            <person name="Golden S.S."/>
            <person name="Youderian P."/>
        </authorList>
    </citation>
    <scope>NUCLEOTIDE SEQUENCE [GENOMIC DNA]</scope>
</reference>
<reference key="3">
    <citation type="submission" date="2005-08" db="EMBL/GenBank/DDBJ databases">
        <title>Complete sequence of chromosome 1 of Synechococcus elongatus PCC 7942.</title>
        <authorList>
            <consortium name="US DOE Joint Genome Institute"/>
            <person name="Copeland A."/>
            <person name="Lucas S."/>
            <person name="Lapidus A."/>
            <person name="Barry K."/>
            <person name="Detter J.C."/>
            <person name="Glavina T."/>
            <person name="Hammon N."/>
            <person name="Israni S."/>
            <person name="Pitluck S."/>
            <person name="Schmutz J."/>
            <person name="Larimer F."/>
            <person name="Land M."/>
            <person name="Kyrpides N."/>
            <person name="Lykidis A."/>
            <person name="Golden S."/>
            <person name="Richardson P."/>
        </authorList>
    </citation>
    <scope>NUCLEOTIDE SEQUENCE [LARGE SCALE GENOMIC DNA]</scope>
    <source>
        <strain>ATCC 33912 / PCC 7942 / FACHB-805</strain>
    </source>
</reference>
<name>RL21_SYNE7</name>
<protein>
    <recommendedName>
        <fullName evidence="1">Large ribosomal subunit protein bL21</fullName>
    </recommendedName>
    <alternativeName>
        <fullName evidence="2">50S ribosomal protein L21</fullName>
    </alternativeName>
</protein>
<organism>
    <name type="scientific">Synechococcus elongatus (strain ATCC 33912 / PCC 7942 / FACHB-805)</name>
    <name type="common">Anacystis nidulans R2</name>
    <dbReference type="NCBI Taxonomy" id="1140"/>
    <lineage>
        <taxon>Bacteria</taxon>
        <taxon>Bacillati</taxon>
        <taxon>Cyanobacteriota</taxon>
        <taxon>Cyanophyceae</taxon>
        <taxon>Synechococcales</taxon>
        <taxon>Synechococcaceae</taxon>
        <taxon>Synechococcus</taxon>
    </lineage>
</organism>
<feature type="chain" id="PRO_0000181015" description="Large ribosomal subunit protein bL21">
    <location>
        <begin position="1"/>
        <end position="127"/>
    </location>
</feature>
<sequence>MAYAIIEASGKQLWVEPGRFYDLDRLDADLDQSLTLDKVLLVQDEGAPQIGQPYVAGATVQVTVLSHPRGRKVTVYKMKPKKKTRKKQGHRQDLTRVLVESITVGGKVLTANAADLPKSEADIDAAG</sequence>
<proteinExistence type="inferred from homology"/>